<gene>
    <name evidence="1" type="primary">rsmG</name>
    <name type="ordered locus">Exig_3045</name>
</gene>
<dbReference type="EC" id="2.1.1.-" evidence="1"/>
<dbReference type="EMBL" id="CP001022">
    <property type="protein sequence ID" value="ACB62490.1"/>
    <property type="molecule type" value="Genomic_DNA"/>
</dbReference>
<dbReference type="RefSeq" id="WP_012371905.1">
    <property type="nucleotide sequence ID" value="NC_010556.1"/>
</dbReference>
<dbReference type="SMR" id="B1YGA6"/>
<dbReference type="STRING" id="262543.Exig_3045"/>
<dbReference type="KEGG" id="esi:Exig_3045"/>
<dbReference type="eggNOG" id="COG0357">
    <property type="taxonomic scope" value="Bacteria"/>
</dbReference>
<dbReference type="HOGENOM" id="CLU_065341_0_0_9"/>
<dbReference type="OrthoDB" id="9808773at2"/>
<dbReference type="Proteomes" id="UP000001681">
    <property type="component" value="Chromosome"/>
</dbReference>
<dbReference type="GO" id="GO:0005829">
    <property type="term" value="C:cytosol"/>
    <property type="evidence" value="ECO:0007669"/>
    <property type="project" value="TreeGrafter"/>
</dbReference>
<dbReference type="GO" id="GO:0070043">
    <property type="term" value="F:rRNA (guanine-N7-)-methyltransferase activity"/>
    <property type="evidence" value="ECO:0007669"/>
    <property type="project" value="UniProtKB-UniRule"/>
</dbReference>
<dbReference type="CDD" id="cd02440">
    <property type="entry name" value="AdoMet_MTases"/>
    <property type="match status" value="1"/>
</dbReference>
<dbReference type="FunFam" id="3.40.50.150:FF:000041">
    <property type="entry name" value="Ribosomal RNA small subunit methyltransferase G"/>
    <property type="match status" value="1"/>
</dbReference>
<dbReference type="Gene3D" id="3.40.50.150">
    <property type="entry name" value="Vaccinia Virus protein VP39"/>
    <property type="match status" value="1"/>
</dbReference>
<dbReference type="HAMAP" id="MF_00074">
    <property type="entry name" value="16SrRNA_methyltr_G"/>
    <property type="match status" value="1"/>
</dbReference>
<dbReference type="InterPro" id="IPR003682">
    <property type="entry name" value="rRNA_ssu_MeTfrase_G"/>
</dbReference>
<dbReference type="InterPro" id="IPR029063">
    <property type="entry name" value="SAM-dependent_MTases_sf"/>
</dbReference>
<dbReference type="NCBIfam" id="TIGR00138">
    <property type="entry name" value="rsmG_gidB"/>
    <property type="match status" value="1"/>
</dbReference>
<dbReference type="PANTHER" id="PTHR31760">
    <property type="entry name" value="S-ADENOSYL-L-METHIONINE-DEPENDENT METHYLTRANSFERASES SUPERFAMILY PROTEIN"/>
    <property type="match status" value="1"/>
</dbReference>
<dbReference type="PANTHER" id="PTHR31760:SF0">
    <property type="entry name" value="S-ADENOSYL-L-METHIONINE-DEPENDENT METHYLTRANSFERASES SUPERFAMILY PROTEIN"/>
    <property type="match status" value="1"/>
</dbReference>
<dbReference type="Pfam" id="PF02527">
    <property type="entry name" value="GidB"/>
    <property type="match status" value="1"/>
</dbReference>
<dbReference type="PIRSF" id="PIRSF003078">
    <property type="entry name" value="GidB"/>
    <property type="match status" value="1"/>
</dbReference>
<dbReference type="SUPFAM" id="SSF53335">
    <property type="entry name" value="S-adenosyl-L-methionine-dependent methyltransferases"/>
    <property type="match status" value="1"/>
</dbReference>
<evidence type="ECO:0000255" key="1">
    <source>
        <dbReference type="HAMAP-Rule" id="MF_00074"/>
    </source>
</evidence>
<comment type="function">
    <text evidence="1">Specifically methylates the N7 position of guanine in position 535 of 16S rRNA.</text>
</comment>
<comment type="subcellular location">
    <subcellularLocation>
        <location evidence="1">Cytoplasm</location>
    </subcellularLocation>
</comment>
<comment type="similarity">
    <text evidence="1">Belongs to the methyltransferase superfamily. RNA methyltransferase RsmG family.</text>
</comment>
<keyword id="KW-0963">Cytoplasm</keyword>
<keyword id="KW-0489">Methyltransferase</keyword>
<keyword id="KW-1185">Reference proteome</keyword>
<keyword id="KW-0698">rRNA processing</keyword>
<keyword id="KW-0949">S-adenosyl-L-methionine</keyword>
<keyword id="KW-0808">Transferase</keyword>
<sequence length="238" mass="26629">MNQQQFVTALAEQGLEVSDHQLQQFRKYYELLVEWNEKMNLTAITDEEGVYLKHFYDSITAAFYFDFTKVETVCDVGAGAGFPSLPIKIMFPHLKVTIIDSLNKRIGFLNMLATELGLEGVAFHHGRAEEFGKNKQFREHFDVVTARAVARMSVLAEYCLPLARVGGQFVALKAAKLGEELEEGATALKVLGGNLRESFQFQLPGEESERNIVIVDKKRLTPGKYPRKAGTPAKDPLG</sequence>
<accession>B1YGA6</accession>
<name>RSMG_EXIS2</name>
<protein>
    <recommendedName>
        <fullName evidence="1">Ribosomal RNA small subunit methyltransferase G</fullName>
        <ecNumber evidence="1">2.1.1.-</ecNumber>
    </recommendedName>
    <alternativeName>
        <fullName evidence="1">16S rRNA 7-methylguanosine methyltransferase</fullName>
        <shortName evidence="1">16S rRNA m7G methyltransferase</shortName>
    </alternativeName>
</protein>
<reference key="1">
    <citation type="submission" date="2008-04" db="EMBL/GenBank/DDBJ databases">
        <title>Complete sequence of chromosome of Exiguobacterium sibiricum 255-15.</title>
        <authorList>
            <consortium name="US DOE Joint Genome Institute"/>
            <person name="Copeland A."/>
            <person name="Lucas S."/>
            <person name="Lapidus A."/>
            <person name="Glavina del Rio T."/>
            <person name="Dalin E."/>
            <person name="Tice H."/>
            <person name="Bruce D."/>
            <person name="Goodwin L."/>
            <person name="Pitluck S."/>
            <person name="Kiss H."/>
            <person name="Chertkov O."/>
            <person name="Monk C."/>
            <person name="Brettin T."/>
            <person name="Detter J.C."/>
            <person name="Han C."/>
            <person name="Kuske C.R."/>
            <person name="Schmutz J."/>
            <person name="Larimer F."/>
            <person name="Land M."/>
            <person name="Hauser L."/>
            <person name="Kyrpides N."/>
            <person name="Mikhailova N."/>
            <person name="Vishnivetskaya T."/>
            <person name="Rodrigues D.F."/>
            <person name="Gilichinsky D."/>
            <person name="Tiedje J."/>
            <person name="Richardson P."/>
        </authorList>
    </citation>
    <scope>NUCLEOTIDE SEQUENCE [LARGE SCALE GENOMIC DNA]</scope>
    <source>
        <strain>DSM 17290 / CCUG 55495 / CIP 109462 / JCM 13490 / 255-15</strain>
    </source>
</reference>
<feature type="chain" id="PRO_1000092630" description="Ribosomal RNA small subunit methyltransferase G">
    <location>
        <begin position="1"/>
        <end position="238"/>
    </location>
</feature>
<feature type="binding site" evidence="1">
    <location>
        <position position="77"/>
    </location>
    <ligand>
        <name>S-adenosyl-L-methionine</name>
        <dbReference type="ChEBI" id="CHEBI:59789"/>
    </ligand>
</feature>
<feature type="binding site" evidence="1">
    <location>
        <position position="82"/>
    </location>
    <ligand>
        <name>S-adenosyl-L-methionine</name>
        <dbReference type="ChEBI" id="CHEBI:59789"/>
    </ligand>
</feature>
<feature type="binding site" evidence="1">
    <location>
        <begin position="128"/>
        <end position="129"/>
    </location>
    <ligand>
        <name>S-adenosyl-L-methionine</name>
        <dbReference type="ChEBI" id="CHEBI:59789"/>
    </ligand>
</feature>
<feature type="binding site" evidence="1">
    <location>
        <position position="147"/>
    </location>
    <ligand>
        <name>S-adenosyl-L-methionine</name>
        <dbReference type="ChEBI" id="CHEBI:59789"/>
    </ligand>
</feature>
<organism>
    <name type="scientific">Exiguobacterium sibiricum (strain DSM 17290 / CCUG 55495 / CIP 109462 / JCM 13490 / 255-15)</name>
    <dbReference type="NCBI Taxonomy" id="262543"/>
    <lineage>
        <taxon>Bacteria</taxon>
        <taxon>Bacillati</taxon>
        <taxon>Bacillota</taxon>
        <taxon>Bacilli</taxon>
        <taxon>Bacillales</taxon>
        <taxon>Bacillales Family XII. Incertae Sedis</taxon>
        <taxon>Exiguobacterium</taxon>
    </lineage>
</organism>
<proteinExistence type="inferred from homology"/>